<gene>
    <name type="primary">ZNF43</name>
    <name type="synonym">KOX27</name>
    <name type="synonym">ZNF39</name>
    <name type="synonym">ZNF39L1</name>
</gene>
<keyword id="KW-0025">Alternative splicing</keyword>
<keyword id="KW-0238">DNA-binding</keyword>
<keyword id="KW-0479">Metal-binding</keyword>
<keyword id="KW-0539">Nucleus</keyword>
<keyword id="KW-1267">Proteomics identification</keyword>
<keyword id="KW-1185">Reference proteome</keyword>
<keyword id="KW-0677">Repeat</keyword>
<keyword id="KW-0804">Transcription</keyword>
<keyword id="KW-0805">Transcription regulation</keyword>
<keyword id="KW-0862">Zinc</keyword>
<keyword id="KW-0863">Zinc-finger</keyword>
<proteinExistence type="evidence at protein level"/>
<feature type="chain" id="PRO_0000047376" description="Zinc finger protein 43">
    <location>
        <begin position="1"/>
        <end position="809"/>
    </location>
</feature>
<feature type="domain" description="KRAB" evidence="2">
    <location>
        <begin position="7"/>
        <end position="75"/>
    </location>
</feature>
<feature type="zinc finger region" description="C2H2-type 1" evidence="1">
    <location>
        <begin position="174"/>
        <end position="196"/>
    </location>
</feature>
<feature type="zinc finger region" description="C2H2-type 2; degenerate" evidence="1">
    <location>
        <begin position="202"/>
        <end position="224"/>
    </location>
</feature>
<feature type="zinc finger region" description="C2H2-type 3; degenerate" evidence="1">
    <location>
        <begin position="230"/>
        <end position="252"/>
    </location>
</feature>
<feature type="zinc finger region" description="C2H2-type 4; degenerate" evidence="1">
    <location>
        <begin position="258"/>
        <end position="280"/>
    </location>
</feature>
<feature type="zinc finger region" description="C2H2-type 5" evidence="1">
    <location>
        <begin position="286"/>
        <end position="308"/>
    </location>
</feature>
<feature type="zinc finger region" description="C2H2-type 6" evidence="1">
    <location>
        <begin position="314"/>
        <end position="336"/>
    </location>
</feature>
<feature type="zinc finger region" description="C2H2-type 7" evidence="1">
    <location>
        <begin position="342"/>
        <end position="364"/>
    </location>
</feature>
<feature type="zinc finger region" description="C2H2-type 8" evidence="1">
    <location>
        <begin position="370"/>
        <end position="392"/>
    </location>
</feature>
<feature type="zinc finger region" description="C2H2-type 9" evidence="1">
    <location>
        <begin position="398"/>
        <end position="420"/>
    </location>
</feature>
<feature type="zinc finger region" description="C2H2-type 10" evidence="1">
    <location>
        <begin position="426"/>
        <end position="448"/>
    </location>
</feature>
<feature type="zinc finger region" description="C2H2-type 11" evidence="1">
    <location>
        <begin position="454"/>
        <end position="476"/>
    </location>
</feature>
<feature type="zinc finger region" description="C2H2-type 12" evidence="1">
    <location>
        <begin position="482"/>
        <end position="504"/>
    </location>
</feature>
<feature type="zinc finger region" description="C2H2-type 13" evidence="1">
    <location>
        <begin position="510"/>
        <end position="532"/>
    </location>
</feature>
<feature type="zinc finger region" description="C2H2-type 14" evidence="1">
    <location>
        <begin position="538"/>
        <end position="560"/>
    </location>
</feature>
<feature type="zinc finger region" description="C2H2-type 15" evidence="1">
    <location>
        <begin position="566"/>
        <end position="588"/>
    </location>
</feature>
<feature type="zinc finger region" description="C2H2-type 16" evidence="1">
    <location>
        <begin position="594"/>
        <end position="616"/>
    </location>
</feature>
<feature type="zinc finger region" description="C2H2-type 17" evidence="1">
    <location>
        <begin position="622"/>
        <end position="644"/>
    </location>
</feature>
<feature type="zinc finger region" description="C2H2-type 18" evidence="1">
    <location>
        <begin position="650"/>
        <end position="672"/>
    </location>
</feature>
<feature type="zinc finger region" description="C2H2-type 19" evidence="1">
    <location>
        <begin position="678"/>
        <end position="700"/>
    </location>
</feature>
<feature type="zinc finger region" description="C2H2-type 20" evidence="1">
    <location>
        <begin position="706"/>
        <end position="728"/>
    </location>
</feature>
<feature type="zinc finger region" description="C2H2-type 21" evidence="1">
    <location>
        <begin position="734"/>
        <end position="756"/>
    </location>
</feature>
<feature type="zinc finger region" description="C2H2-type 22" evidence="1">
    <location>
        <begin position="762"/>
        <end position="784"/>
    </location>
</feature>
<feature type="splice variant" id="VSP_036734" description="In isoform 2." evidence="5 6 7 8">
    <original>MGPLTFM</original>
    <variation>M</variation>
    <location>
        <begin position="1"/>
        <end position="7"/>
    </location>
</feature>
<feature type="sequence variant" id="VAR_035569" description="In a colorectal cancer sample; somatic mutation; dbSNP:rs200399581." evidence="3">
    <original>R</original>
    <variation>C</variation>
    <location>
        <position position="244"/>
    </location>
</feature>
<feature type="sequence variant" id="VAR_054794" description="In dbSNP:rs1063327." evidence="4">
    <original>S</original>
    <variation>P</variation>
    <location>
        <position position="718"/>
    </location>
</feature>
<feature type="sequence conflict" description="In Ref. 8; AAA58674." evidence="9" ref="8">
    <original>L</original>
    <variation>M</variation>
    <location>
        <position position="43"/>
    </location>
</feature>
<feature type="sequence conflict" description="In Ref. 8; AAA58674." evidence="9" ref="8">
    <original>P</original>
    <variation>S</variation>
    <location>
        <position position="187"/>
    </location>
</feature>
<feature type="sequence conflict" description="In Ref. 3; BAF84042." evidence="9" ref="3">
    <original>K</original>
    <variation>R</variation>
    <location>
        <position position="573"/>
    </location>
</feature>
<feature type="sequence conflict" description="In Ref. 4; CAI45941." evidence="9" ref="4">
    <original>Y</original>
    <variation>H</variation>
    <location>
        <position position="622"/>
    </location>
</feature>
<feature type="sequence conflict" description="In Ref. 4; CAI45941." evidence="9" ref="4">
    <original>E</original>
    <variation>G</variation>
    <location>
        <position position="738"/>
    </location>
</feature>
<feature type="sequence conflict" description="In Ref. 3; BAF84042." evidence="9" ref="3">
    <original>V</original>
    <variation>M</variation>
    <location>
        <position position="797"/>
    </location>
</feature>
<organism>
    <name type="scientific">Homo sapiens</name>
    <name type="common">Human</name>
    <dbReference type="NCBI Taxonomy" id="9606"/>
    <lineage>
        <taxon>Eukaryota</taxon>
        <taxon>Metazoa</taxon>
        <taxon>Chordata</taxon>
        <taxon>Craniata</taxon>
        <taxon>Vertebrata</taxon>
        <taxon>Euteleostomi</taxon>
        <taxon>Mammalia</taxon>
        <taxon>Eutheria</taxon>
        <taxon>Euarchontoglires</taxon>
        <taxon>Primates</taxon>
        <taxon>Haplorrhini</taxon>
        <taxon>Catarrhini</taxon>
        <taxon>Hominidae</taxon>
        <taxon>Homo</taxon>
    </lineage>
</organism>
<accession>P17038</accession>
<accession>A8K5N8</accession>
<accession>P28160</accession>
<accession>Q53XQ2</accession>
<accession>Q5H9T3</accession>
<accession>Q96DG1</accession>
<evidence type="ECO:0000255" key="1">
    <source>
        <dbReference type="PROSITE-ProRule" id="PRU00042"/>
    </source>
</evidence>
<evidence type="ECO:0000255" key="2">
    <source>
        <dbReference type="PROSITE-ProRule" id="PRU00119"/>
    </source>
</evidence>
<evidence type="ECO:0000269" key="3">
    <source>
    </source>
</evidence>
<evidence type="ECO:0000269" key="4">
    <source>
    </source>
</evidence>
<evidence type="ECO:0000303" key="5">
    <source>
    </source>
</evidence>
<evidence type="ECO:0000303" key="6">
    <source>
    </source>
</evidence>
<evidence type="ECO:0000303" key="7">
    <source>
    </source>
</evidence>
<evidence type="ECO:0000303" key="8">
    <source ref="2"/>
</evidence>
<evidence type="ECO:0000305" key="9"/>
<comment type="function">
    <text>May be involved in transcriptional regulation.</text>
</comment>
<comment type="subcellular location">
    <subcellularLocation>
        <location evidence="9">Nucleus</location>
    </subcellularLocation>
</comment>
<comment type="alternative products">
    <event type="alternative splicing"/>
    <isoform>
        <id>P17038-1</id>
        <name>1</name>
        <sequence type="displayed"/>
    </isoform>
    <isoform>
        <id>P17038-2</id>
        <name>2</name>
        <sequence type="described" ref="VSP_036734"/>
    </isoform>
</comment>
<comment type="tissue specificity">
    <text>T- and B-cell lines.</text>
</comment>
<comment type="similarity">
    <text evidence="9">Belongs to the krueppel C2H2-type zinc-finger protein family.</text>
</comment>
<protein>
    <recommendedName>
        <fullName>Zinc finger protein 43</fullName>
    </recommendedName>
    <alternativeName>
        <fullName>Zinc finger protein 39</fullName>
    </alternativeName>
    <alternativeName>
        <fullName>Zinc finger protein HTF6</fullName>
    </alternativeName>
    <alternativeName>
        <fullName>Zinc finger protein KOX27</fullName>
    </alternativeName>
</protein>
<sequence>MGPLTFMDVAIEFCLEEWQCLDIAQQNLYRNVMLENYRNLVFLGIAVSKPDLITCLEQEKEPWEPMRRHEMVAKPPVMCSHFTQDFWPEQHIKDPFQKATLRRYKNCEHKNVHLKKDHKSVDECKVHRGGYNGFNQCLPATQSKIFLFDKCVKAFHKFSNSNRHKISHTEKKLFKCKECGKSFCMLPHLAQHKIIHTRVNFCKCEKCGKAFNCPSIITKHKRINTGEKPYTCEECGKVFNWSSRLTTHKKNYTRYKLYKCEECGKAFNKSSILTTHKIIRTGEKFYKCKECAKAFNQSSNLTEHKKIHPGEKPYKCEECGKAFNWPSTLTKHKRIHTGEKPYTCEECGKAFNQFSNLTTHKRIHTAEKFYKCTECGEAFSRSSNLTKHKKIHTEKKPYKCEECGKAFKWSSKLTEHKLTHTGEKPYKCEECGKAFNWPSTLTKHNRIHTGEKPYKCEVCGKAFNQFSNLTTHKRIHTAEKPYKCEECGKAFSRSSNLTKHKKIHIEKKPYKCEECGKAFKWSSKLTEHKITHTGEKPYKCEECGKAFNHFSILTKHKRIHTGEKPYKCEECGKAFTQSSNLTTHKKIHTGEKFYKCEECGKAFTQSSNLTTHKKIHTGGKPYKCEECGKAFNQFSTLTKHKIIHTEEKPYKCEECGKAFKWSSTLTKHKIIHTGEKPYKCEECGKAFKLSSTLSTHKIIHTGEKPYKCEKCGKAFNRSSNLIEHKKIHTGEQPYKCEECGKAFNYSSHLNTHKRIHTKEQPYKCKECGKAFNQYSNLTTHNKIHTGEKLYKPEDVTVILTTPQTFSNIK</sequence>
<reference key="1">
    <citation type="journal article" date="1991" name="Nucleic Acids Res.">
        <title>A gene encoding 22 highly related zinc fingers is expressed in lymphoid cell lines.</title>
        <authorList>
            <person name="Lovering R."/>
            <person name="Trowsdale J."/>
        </authorList>
    </citation>
    <scope>NUCLEOTIDE SEQUENCE [MRNA] (ISOFORM 2)</scope>
    <scope>VARIANT PRO-718</scope>
    <source>
        <tissue>T-cell</tissue>
    </source>
</reference>
<reference key="2">
    <citation type="submission" date="2003-08" db="EMBL/GenBank/DDBJ databases">
        <title>Cloning of human full-length CDSs in BD Creator(TM) system donor vector.</title>
        <authorList>
            <person name="Kalnine N."/>
            <person name="Chen X."/>
            <person name="Rolfs A."/>
            <person name="Halleck A."/>
            <person name="Hines L."/>
            <person name="Eisenstein S."/>
            <person name="Koundinya M."/>
            <person name="Raphael J."/>
            <person name="Moreira D."/>
            <person name="Kelley T."/>
            <person name="LaBaer J."/>
            <person name="Lin Y."/>
            <person name="Phelan M."/>
            <person name="Farmer A."/>
        </authorList>
    </citation>
    <scope>NUCLEOTIDE SEQUENCE [LARGE SCALE MRNA] (ISOFORM 2)</scope>
</reference>
<reference key="3">
    <citation type="journal article" date="2004" name="Nat. Genet.">
        <title>Complete sequencing and characterization of 21,243 full-length human cDNAs.</title>
        <authorList>
            <person name="Ota T."/>
            <person name="Suzuki Y."/>
            <person name="Nishikawa T."/>
            <person name="Otsuki T."/>
            <person name="Sugiyama T."/>
            <person name="Irie R."/>
            <person name="Wakamatsu A."/>
            <person name="Hayashi K."/>
            <person name="Sato H."/>
            <person name="Nagai K."/>
            <person name="Kimura K."/>
            <person name="Makita H."/>
            <person name="Sekine M."/>
            <person name="Obayashi M."/>
            <person name="Nishi T."/>
            <person name="Shibahara T."/>
            <person name="Tanaka T."/>
            <person name="Ishii S."/>
            <person name="Yamamoto J."/>
            <person name="Saito K."/>
            <person name="Kawai Y."/>
            <person name="Isono Y."/>
            <person name="Nakamura Y."/>
            <person name="Nagahari K."/>
            <person name="Murakami K."/>
            <person name="Yasuda T."/>
            <person name="Iwayanagi T."/>
            <person name="Wagatsuma M."/>
            <person name="Shiratori A."/>
            <person name="Sudo H."/>
            <person name="Hosoiri T."/>
            <person name="Kaku Y."/>
            <person name="Kodaira H."/>
            <person name="Kondo H."/>
            <person name="Sugawara M."/>
            <person name="Takahashi M."/>
            <person name="Kanda K."/>
            <person name="Yokoi T."/>
            <person name="Furuya T."/>
            <person name="Kikkawa E."/>
            <person name="Omura Y."/>
            <person name="Abe K."/>
            <person name="Kamihara K."/>
            <person name="Katsuta N."/>
            <person name="Sato K."/>
            <person name="Tanikawa M."/>
            <person name="Yamazaki M."/>
            <person name="Ninomiya K."/>
            <person name="Ishibashi T."/>
            <person name="Yamashita H."/>
            <person name="Murakawa K."/>
            <person name="Fujimori K."/>
            <person name="Tanai H."/>
            <person name="Kimata M."/>
            <person name="Watanabe M."/>
            <person name="Hiraoka S."/>
            <person name="Chiba Y."/>
            <person name="Ishida S."/>
            <person name="Ono Y."/>
            <person name="Takiguchi S."/>
            <person name="Watanabe S."/>
            <person name="Yosida M."/>
            <person name="Hotuta T."/>
            <person name="Kusano J."/>
            <person name="Kanehori K."/>
            <person name="Takahashi-Fujii A."/>
            <person name="Hara H."/>
            <person name="Tanase T.-O."/>
            <person name="Nomura Y."/>
            <person name="Togiya S."/>
            <person name="Komai F."/>
            <person name="Hara R."/>
            <person name="Takeuchi K."/>
            <person name="Arita M."/>
            <person name="Imose N."/>
            <person name="Musashino K."/>
            <person name="Yuuki H."/>
            <person name="Oshima A."/>
            <person name="Sasaki N."/>
            <person name="Aotsuka S."/>
            <person name="Yoshikawa Y."/>
            <person name="Matsunawa H."/>
            <person name="Ichihara T."/>
            <person name="Shiohata N."/>
            <person name="Sano S."/>
            <person name="Moriya S."/>
            <person name="Momiyama H."/>
            <person name="Satoh N."/>
            <person name="Takami S."/>
            <person name="Terashima Y."/>
            <person name="Suzuki O."/>
            <person name="Nakagawa S."/>
            <person name="Senoh A."/>
            <person name="Mizoguchi H."/>
            <person name="Goto Y."/>
            <person name="Shimizu F."/>
            <person name="Wakebe H."/>
            <person name="Hishigaki H."/>
            <person name="Watanabe T."/>
            <person name="Sugiyama A."/>
            <person name="Takemoto M."/>
            <person name="Kawakami B."/>
            <person name="Yamazaki M."/>
            <person name="Watanabe K."/>
            <person name="Kumagai A."/>
            <person name="Itakura S."/>
            <person name="Fukuzumi Y."/>
            <person name="Fujimori Y."/>
            <person name="Komiyama M."/>
            <person name="Tashiro H."/>
            <person name="Tanigami A."/>
            <person name="Fujiwara T."/>
            <person name="Ono T."/>
            <person name="Yamada K."/>
            <person name="Fujii Y."/>
            <person name="Ozaki K."/>
            <person name="Hirao M."/>
            <person name="Ohmori Y."/>
            <person name="Kawabata A."/>
            <person name="Hikiji T."/>
            <person name="Kobatake N."/>
            <person name="Inagaki H."/>
            <person name="Ikema Y."/>
            <person name="Okamoto S."/>
            <person name="Okitani R."/>
            <person name="Kawakami T."/>
            <person name="Noguchi S."/>
            <person name="Itoh T."/>
            <person name="Shigeta K."/>
            <person name="Senba T."/>
            <person name="Matsumura K."/>
            <person name="Nakajima Y."/>
            <person name="Mizuno T."/>
            <person name="Morinaga M."/>
            <person name="Sasaki M."/>
            <person name="Togashi T."/>
            <person name="Oyama M."/>
            <person name="Hata H."/>
            <person name="Watanabe M."/>
            <person name="Komatsu T."/>
            <person name="Mizushima-Sugano J."/>
            <person name="Satoh T."/>
            <person name="Shirai Y."/>
            <person name="Takahashi Y."/>
            <person name="Nakagawa K."/>
            <person name="Okumura K."/>
            <person name="Nagase T."/>
            <person name="Nomura N."/>
            <person name="Kikuchi H."/>
            <person name="Masuho Y."/>
            <person name="Yamashita R."/>
            <person name="Nakai K."/>
            <person name="Yada T."/>
            <person name="Nakamura Y."/>
            <person name="Ohara O."/>
            <person name="Isogai T."/>
            <person name="Sugano S."/>
        </authorList>
    </citation>
    <scope>NUCLEOTIDE SEQUENCE [LARGE SCALE MRNA] (ISOFORM 2)</scope>
    <source>
        <tissue>Brain</tissue>
    </source>
</reference>
<reference key="4">
    <citation type="journal article" date="2007" name="BMC Genomics">
        <title>The full-ORF clone resource of the German cDNA consortium.</title>
        <authorList>
            <person name="Bechtel S."/>
            <person name="Rosenfelder H."/>
            <person name="Duda A."/>
            <person name="Schmidt C.P."/>
            <person name="Ernst U."/>
            <person name="Wellenreuther R."/>
            <person name="Mehrle A."/>
            <person name="Schuster C."/>
            <person name="Bahr A."/>
            <person name="Bloecker H."/>
            <person name="Heubner D."/>
            <person name="Hoerlein A."/>
            <person name="Michel G."/>
            <person name="Wedler H."/>
            <person name="Koehrer K."/>
            <person name="Ottenwaelder B."/>
            <person name="Poustka A."/>
            <person name="Wiemann S."/>
            <person name="Schupp I."/>
        </authorList>
    </citation>
    <scope>NUCLEOTIDE SEQUENCE [LARGE SCALE MRNA] (ISOFORM 2)</scope>
    <source>
        <tissue>Endometrium</tissue>
    </source>
</reference>
<reference key="5">
    <citation type="journal article" date="2004" name="Nature">
        <title>The DNA sequence and biology of human chromosome 19.</title>
        <authorList>
            <person name="Grimwood J."/>
            <person name="Gordon L.A."/>
            <person name="Olsen A.S."/>
            <person name="Terry A."/>
            <person name="Schmutz J."/>
            <person name="Lamerdin J.E."/>
            <person name="Hellsten U."/>
            <person name="Goodstein D."/>
            <person name="Couronne O."/>
            <person name="Tran-Gyamfi M."/>
            <person name="Aerts A."/>
            <person name="Altherr M."/>
            <person name="Ashworth L."/>
            <person name="Bajorek E."/>
            <person name="Black S."/>
            <person name="Branscomb E."/>
            <person name="Caenepeel S."/>
            <person name="Carrano A.V."/>
            <person name="Caoile C."/>
            <person name="Chan Y.M."/>
            <person name="Christensen M."/>
            <person name="Cleland C.A."/>
            <person name="Copeland A."/>
            <person name="Dalin E."/>
            <person name="Dehal P."/>
            <person name="Denys M."/>
            <person name="Detter J.C."/>
            <person name="Escobar J."/>
            <person name="Flowers D."/>
            <person name="Fotopulos D."/>
            <person name="Garcia C."/>
            <person name="Georgescu A.M."/>
            <person name="Glavina T."/>
            <person name="Gomez M."/>
            <person name="Gonzales E."/>
            <person name="Groza M."/>
            <person name="Hammon N."/>
            <person name="Hawkins T."/>
            <person name="Haydu L."/>
            <person name="Ho I."/>
            <person name="Huang W."/>
            <person name="Israni S."/>
            <person name="Jett J."/>
            <person name="Kadner K."/>
            <person name="Kimball H."/>
            <person name="Kobayashi A."/>
            <person name="Larionov V."/>
            <person name="Leem S.-H."/>
            <person name="Lopez F."/>
            <person name="Lou Y."/>
            <person name="Lowry S."/>
            <person name="Malfatti S."/>
            <person name="Martinez D."/>
            <person name="McCready P.M."/>
            <person name="Medina C."/>
            <person name="Morgan J."/>
            <person name="Nelson K."/>
            <person name="Nolan M."/>
            <person name="Ovcharenko I."/>
            <person name="Pitluck S."/>
            <person name="Pollard M."/>
            <person name="Popkie A.P."/>
            <person name="Predki P."/>
            <person name="Quan G."/>
            <person name="Ramirez L."/>
            <person name="Rash S."/>
            <person name="Retterer J."/>
            <person name="Rodriguez A."/>
            <person name="Rogers S."/>
            <person name="Salamov A."/>
            <person name="Salazar A."/>
            <person name="She X."/>
            <person name="Smith D."/>
            <person name="Slezak T."/>
            <person name="Solovyev V."/>
            <person name="Thayer N."/>
            <person name="Tice H."/>
            <person name="Tsai M."/>
            <person name="Ustaszewska A."/>
            <person name="Vo N."/>
            <person name="Wagner M."/>
            <person name="Wheeler J."/>
            <person name="Wu K."/>
            <person name="Xie G."/>
            <person name="Yang J."/>
            <person name="Dubchak I."/>
            <person name="Furey T.S."/>
            <person name="DeJong P."/>
            <person name="Dickson M."/>
            <person name="Gordon D."/>
            <person name="Eichler E.E."/>
            <person name="Pennacchio L.A."/>
            <person name="Richardson P."/>
            <person name="Stubbs L."/>
            <person name="Rokhsar D.S."/>
            <person name="Myers R.M."/>
            <person name="Rubin E.M."/>
            <person name="Lucas S.M."/>
        </authorList>
    </citation>
    <scope>NUCLEOTIDE SEQUENCE [LARGE SCALE GENOMIC DNA]</scope>
</reference>
<reference key="6">
    <citation type="submission" date="2005-07" db="EMBL/GenBank/DDBJ databases">
        <authorList>
            <person name="Mural R.J."/>
            <person name="Istrail S."/>
            <person name="Sutton G.G."/>
            <person name="Florea L."/>
            <person name="Halpern A.L."/>
            <person name="Mobarry C.M."/>
            <person name="Lippert R."/>
            <person name="Walenz B."/>
            <person name="Shatkay H."/>
            <person name="Dew I."/>
            <person name="Miller J.R."/>
            <person name="Flanigan M.J."/>
            <person name="Edwards N.J."/>
            <person name="Bolanos R."/>
            <person name="Fasulo D."/>
            <person name="Halldorsson B.V."/>
            <person name="Hannenhalli S."/>
            <person name="Turner R."/>
            <person name="Yooseph S."/>
            <person name="Lu F."/>
            <person name="Nusskern D.R."/>
            <person name="Shue B.C."/>
            <person name="Zheng X.H."/>
            <person name="Zhong F."/>
            <person name="Delcher A.L."/>
            <person name="Huson D.H."/>
            <person name="Kravitz S.A."/>
            <person name="Mouchard L."/>
            <person name="Reinert K."/>
            <person name="Remington K.A."/>
            <person name="Clark A.G."/>
            <person name="Waterman M.S."/>
            <person name="Eichler E.E."/>
            <person name="Adams M.D."/>
            <person name="Hunkapiller M.W."/>
            <person name="Myers E.W."/>
            <person name="Venter J.C."/>
        </authorList>
    </citation>
    <scope>NUCLEOTIDE SEQUENCE [LARGE SCALE GENOMIC DNA]</scope>
</reference>
<reference key="7">
    <citation type="journal article" date="2004" name="Genome Res.">
        <title>The status, quality, and expansion of the NIH full-length cDNA project: the Mammalian Gene Collection (MGC).</title>
        <authorList>
            <consortium name="The MGC Project Team"/>
        </authorList>
    </citation>
    <scope>NUCLEOTIDE SEQUENCE [LARGE SCALE MRNA] (ISOFORM 1)</scope>
    <source>
        <tissue>Lymph</tissue>
    </source>
</reference>
<reference key="8">
    <citation type="journal article" date="1991" name="Proc. Natl. Acad. Sci. U.S.A.">
        <title>The evolutionarily conserved Kruppel-associated box domain defines a subfamily of eukaryotic multifingered proteins.</title>
        <authorList>
            <person name="Bellefroid E.J."/>
            <person name="Poncelet D.A."/>
            <person name="Lecocq P.J."/>
            <person name="Revelant O."/>
            <person name="Martial J.A."/>
        </authorList>
    </citation>
    <scope>NUCLEOTIDE SEQUENCE [MRNA] OF 43-196 (ISOFORMS 1/2)</scope>
</reference>
<reference key="9">
    <citation type="journal article" date="1990" name="New Biol.">
        <title>Multiple genes encoding zinc finger domains are expressed in human T cells.</title>
        <authorList>
            <person name="Thiesen H.-J."/>
        </authorList>
    </citation>
    <scope>NUCLEOTIDE SEQUENCE [MRNA] OF 482-537 (ISOFORMS 1/2)</scope>
    <source>
        <tissue>Lymphoid tissue</tissue>
    </source>
</reference>
<reference key="10">
    <citation type="journal article" date="2006" name="Science">
        <title>The consensus coding sequences of human breast and colorectal cancers.</title>
        <authorList>
            <person name="Sjoeblom T."/>
            <person name="Jones S."/>
            <person name="Wood L.D."/>
            <person name="Parsons D.W."/>
            <person name="Lin J."/>
            <person name="Barber T.D."/>
            <person name="Mandelker D."/>
            <person name="Leary R.J."/>
            <person name="Ptak J."/>
            <person name="Silliman N."/>
            <person name="Szabo S."/>
            <person name="Buckhaults P."/>
            <person name="Farrell C."/>
            <person name="Meeh P."/>
            <person name="Markowitz S.D."/>
            <person name="Willis J."/>
            <person name="Dawson D."/>
            <person name="Willson J.K.V."/>
            <person name="Gazdar A.F."/>
            <person name="Hartigan J."/>
            <person name="Wu L."/>
            <person name="Liu C."/>
            <person name="Parmigiani G."/>
            <person name="Park B.H."/>
            <person name="Bachman K.E."/>
            <person name="Papadopoulos N."/>
            <person name="Vogelstein B."/>
            <person name="Kinzler K.W."/>
            <person name="Velculescu V.E."/>
        </authorList>
    </citation>
    <scope>VARIANT [LARGE SCALE ANALYSIS] CYS-244</scope>
</reference>
<dbReference type="EMBL" id="X59244">
    <property type="protein sequence ID" value="CAA41932.1"/>
    <property type="molecule type" value="mRNA"/>
</dbReference>
<dbReference type="EMBL" id="BT009756">
    <property type="protein sequence ID" value="AAP88758.1"/>
    <property type="molecule type" value="mRNA"/>
</dbReference>
<dbReference type="EMBL" id="AK291353">
    <property type="protein sequence ID" value="BAF84042.1"/>
    <property type="molecule type" value="mRNA"/>
</dbReference>
<dbReference type="EMBL" id="CR933640">
    <property type="protein sequence ID" value="CAI45941.1"/>
    <property type="molecule type" value="mRNA"/>
</dbReference>
<dbReference type="EMBL" id="AC010617">
    <property type="status" value="NOT_ANNOTATED_CDS"/>
    <property type="molecule type" value="Genomic_DNA"/>
</dbReference>
<dbReference type="EMBL" id="AC092364">
    <property type="status" value="NOT_ANNOTATED_CDS"/>
    <property type="molecule type" value="Genomic_DNA"/>
</dbReference>
<dbReference type="EMBL" id="CH471106">
    <property type="protein sequence ID" value="EAW84908.1"/>
    <property type="molecule type" value="Genomic_DNA"/>
</dbReference>
<dbReference type="EMBL" id="BC006528">
    <property type="protein sequence ID" value="AAH06528.2"/>
    <property type="molecule type" value="mRNA"/>
</dbReference>
<dbReference type="EMBL" id="M61869">
    <property type="protein sequence ID" value="AAA58674.1"/>
    <property type="molecule type" value="mRNA"/>
</dbReference>
<dbReference type="EMBL" id="X52358">
    <property type="protein sequence ID" value="CAA36584.1"/>
    <property type="molecule type" value="mRNA"/>
</dbReference>
<dbReference type="CCDS" id="CCDS12413.2">
    <molecule id="P17038-1"/>
</dbReference>
<dbReference type="CCDS" id="CCDS59367.1">
    <molecule id="P17038-2"/>
</dbReference>
<dbReference type="PIR" id="D39384">
    <property type="entry name" value="D39384"/>
</dbReference>
<dbReference type="PIR" id="S26823">
    <property type="entry name" value="S26823"/>
</dbReference>
<dbReference type="RefSeq" id="NP_001243577.1">
    <molecule id="P17038-2"/>
    <property type="nucleotide sequence ID" value="NM_001256648.2"/>
</dbReference>
<dbReference type="RefSeq" id="NP_001243578.1">
    <molecule id="P17038-2"/>
    <property type="nucleotide sequence ID" value="NM_001256649.2"/>
</dbReference>
<dbReference type="RefSeq" id="NP_001243579.1">
    <molecule id="P17038-2"/>
    <property type="nucleotide sequence ID" value="NM_001256650.2"/>
</dbReference>
<dbReference type="RefSeq" id="NP_003414.2">
    <molecule id="P17038-1"/>
    <property type="nucleotide sequence ID" value="NM_003423.4"/>
</dbReference>
<dbReference type="RefSeq" id="XP_011526559.1">
    <property type="nucleotide sequence ID" value="XM_011528257.2"/>
</dbReference>
<dbReference type="RefSeq" id="XP_011526561.1">
    <property type="nucleotide sequence ID" value="XM_011528259.2"/>
</dbReference>
<dbReference type="RefSeq" id="XP_016882696.1">
    <molecule id="P17038-2"/>
    <property type="nucleotide sequence ID" value="XM_017027207.3"/>
</dbReference>
<dbReference type="RefSeq" id="XP_016882697.1">
    <molecule id="P17038-2"/>
    <property type="nucleotide sequence ID" value="XM_017027208.3"/>
</dbReference>
<dbReference type="RefSeq" id="XP_016882698.1">
    <molecule id="P17038-2"/>
    <property type="nucleotide sequence ID" value="XM_017027209.3"/>
</dbReference>
<dbReference type="RefSeq" id="XP_016882699.1">
    <property type="nucleotide sequence ID" value="XM_017027210.1"/>
</dbReference>
<dbReference type="RefSeq" id="XP_016882700.1">
    <molecule id="P17038-2"/>
    <property type="nucleotide sequence ID" value="XM_017027211.3"/>
</dbReference>
<dbReference type="RefSeq" id="XP_016882701.1">
    <molecule id="P17038-2"/>
    <property type="nucleotide sequence ID" value="XM_017027212.3"/>
</dbReference>
<dbReference type="RefSeq" id="XP_016882702.1">
    <molecule id="P17038-2"/>
    <property type="nucleotide sequence ID" value="XM_017027213.3"/>
</dbReference>
<dbReference type="RefSeq" id="XP_016882703.1">
    <molecule id="P17038-2"/>
    <property type="nucleotide sequence ID" value="XM_017027214.3"/>
</dbReference>
<dbReference type="RefSeq" id="XP_016882704.1">
    <property type="nucleotide sequence ID" value="XM_017027215.1"/>
</dbReference>
<dbReference type="RefSeq" id="XP_016882705.1">
    <property type="nucleotide sequence ID" value="XM_017027216.1"/>
</dbReference>
<dbReference type="RefSeq" id="XP_047295270.1">
    <molecule id="P17038-2"/>
    <property type="nucleotide sequence ID" value="XM_047439314.1"/>
</dbReference>
<dbReference type="RefSeq" id="XP_047295271.1">
    <molecule id="P17038-2"/>
    <property type="nucleotide sequence ID" value="XM_047439315.1"/>
</dbReference>
<dbReference type="RefSeq" id="XP_054177928.1">
    <molecule id="P17038-2"/>
    <property type="nucleotide sequence ID" value="XM_054321953.1"/>
</dbReference>
<dbReference type="RefSeq" id="XP_054177929.1">
    <molecule id="P17038-2"/>
    <property type="nucleotide sequence ID" value="XM_054321954.1"/>
</dbReference>
<dbReference type="RefSeq" id="XP_054177930.1">
    <molecule id="P17038-2"/>
    <property type="nucleotide sequence ID" value="XM_054321955.1"/>
</dbReference>
<dbReference type="RefSeq" id="XP_054177931.1">
    <molecule id="P17038-2"/>
    <property type="nucleotide sequence ID" value="XM_054321956.1"/>
</dbReference>
<dbReference type="RefSeq" id="XP_054177932.1">
    <molecule id="P17038-2"/>
    <property type="nucleotide sequence ID" value="XM_054321957.1"/>
</dbReference>
<dbReference type="RefSeq" id="XP_054177933.1">
    <molecule id="P17038-2"/>
    <property type="nucleotide sequence ID" value="XM_054321958.1"/>
</dbReference>
<dbReference type="RefSeq" id="XP_054177934.1">
    <molecule id="P17038-2"/>
    <property type="nucleotide sequence ID" value="XM_054321959.1"/>
</dbReference>
<dbReference type="RefSeq" id="XP_054177935.1">
    <molecule id="P17038-2"/>
    <property type="nucleotide sequence ID" value="XM_054321960.1"/>
</dbReference>
<dbReference type="RefSeq" id="XP_054177936.1">
    <molecule id="P17038-2"/>
    <property type="nucleotide sequence ID" value="XM_054321961.1"/>
</dbReference>
<dbReference type="SMR" id="P17038"/>
<dbReference type="BioGRID" id="113420">
    <property type="interactions" value="1"/>
</dbReference>
<dbReference type="FunCoup" id="P17038">
    <property type="interactions" value="10"/>
</dbReference>
<dbReference type="STRING" id="9606.ENSP00000350085"/>
<dbReference type="GlyGen" id="P17038">
    <property type="glycosylation" value="1 site, 1 O-linked glycan (1 site)"/>
</dbReference>
<dbReference type="iPTMnet" id="P17038"/>
<dbReference type="PhosphoSitePlus" id="P17038"/>
<dbReference type="BioMuta" id="ZNF43"/>
<dbReference type="DMDM" id="229485311"/>
<dbReference type="jPOST" id="P17038"/>
<dbReference type="MassIVE" id="P17038"/>
<dbReference type="PaxDb" id="9606-ENSP00000350085"/>
<dbReference type="PeptideAtlas" id="P17038"/>
<dbReference type="ProteomicsDB" id="53440">
    <molecule id="P17038-1"/>
</dbReference>
<dbReference type="ProteomicsDB" id="53441">
    <molecule id="P17038-2"/>
</dbReference>
<dbReference type="Antibodypedia" id="28707">
    <property type="antibodies" value="79 antibodies from 16 providers"/>
</dbReference>
<dbReference type="DNASU" id="7594"/>
<dbReference type="Ensembl" id="ENST00000354959.9">
    <molecule id="P17038-1"/>
    <property type="protein sequence ID" value="ENSP00000347045.4"/>
    <property type="gene ID" value="ENSG00000198521.12"/>
</dbReference>
<dbReference type="Ensembl" id="ENST00000594012.5">
    <molecule id="P17038-2"/>
    <property type="protein sequence ID" value="ENSP00000469578.1"/>
    <property type="gene ID" value="ENSG00000198521.12"/>
</dbReference>
<dbReference type="Ensembl" id="ENST00000595461.5">
    <molecule id="P17038-2"/>
    <property type="protein sequence ID" value="ENSP00000469645.1"/>
    <property type="gene ID" value="ENSG00000198521.12"/>
</dbReference>
<dbReference type="Ensembl" id="ENST00000598381.5">
    <molecule id="P17038-2"/>
    <property type="protein sequence ID" value="ENSP00000470275.1"/>
    <property type="gene ID" value="ENSG00000198521.12"/>
</dbReference>
<dbReference type="GeneID" id="7594"/>
<dbReference type="KEGG" id="hsa:7594"/>
<dbReference type="MANE-Select" id="ENST00000354959.9">
    <property type="protein sequence ID" value="ENSP00000347045.4"/>
    <property type="RefSeq nucleotide sequence ID" value="NM_003423.4"/>
    <property type="RefSeq protein sequence ID" value="NP_003414.2"/>
</dbReference>
<dbReference type="UCSC" id="uc002nqj.5">
    <molecule id="P17038-1"/>
    <property type="organism name" value="human"/>
</dbReference>
<dbReference type="AGR" id="HGNC:13109"/>
<dbReference type="CTD" id="7594"/>
<dbReference type="GeneCards" id="ZNF43"/>
<dbReference type="HGNC" id="HGNC:13109">
    <property type="gene designation" value="ZNF43"/>
</dbReference>
<dbReference type="HPA" id="ENSG00000198521">
    <property type="expression patterns" value="Low tissue specificity"/>
</dbReference>
<dbReference type="MIM" id="603972">
    <property type="type" value="gene"/>
</dbReference>
<dbReference type="neXtProt" id="NX_P17038"/>
<dbReference type="OpenTargets" id="ENSG00000198521"/>
<dbReference type="PharmGKB" id="PA37684"/>
<dbReference type="VEuPathDB" id="HostDB:ENSG00000198521"/>
<dbReference type="eggNOG" id="KOG1721">
    <property type="taxonomic scope" value="Eukaryota"/>
</dbReference>
<dbReference type="GeneTree" id="ENSGT00940000163744"/>
<dbReference type="HOGENOM" id="CLU_002678_17_1_1"/>
<dbReference type="InParanoid" id="P17038"/>
<dbReference type="OrthoDB" id="8895262at2759"/>
<dbReference type="PAN-GO" id="P17038">
    <property type="GO annotations" value="4 GO annotations based on evolutionary models"/>
</dbReference>
<dbReference type="PhylomeDB" id="P17038"/>
<dbReference type="TreeFam" id="TF343410"/>
<dbReference type="PathwayCommons" id="P17038"/>
<dbReference type="Reactome" id="R-HSA-212436">
    <property type="pathway name" value="Generic Transcription Pathway"/>
</dbReference>
<dbReference type="BioGRID-ORCS" id="7594">
    <property type="hits" value="15 hits in 1106 CRISPR screens"/>
</dbReference>
<dbReference type="ChiTaRS" id="ZNF43">
    <property type="organism name" value="human"/>
</dbReference>
<dbReference type="GeneWiki" id="ZNF43"/>
<dbReference type="GenomeRNAi" id="7594"/>
<dbReference type="Pharos" id="P17038">
    <property type="development level" value="Tdark"/>
</dbReference>
<dbReference type="PRO" id="PR:P17038"/>
<dbReference type="Proteomes" id="UP000005640">
    <property type="component" value="Chromosome 19"/>
</dbReference>
<dbReference type="RNAct" id="P17038">
    <property type="molecule type" value="protein"/>
</dbReference>
<dbReference type="Bgee" id="ENSG00000198521">
    <property type="expression patterns" value="Expressed in calcaneal tendon and 111 other cell types or tissues"/>
</dbReference>
<dbReference type="ExpressionAtlas" id="P17038">
    <property type="expression patterns" value="baseline and differential"/>
</dbReference>
<dbReference type="GO" id="GO:0005634">
    <property type="term" value="C:nucleus"/>
    <property type="evidence" value="ECO:0000318"/>
    <property type="project" value="GO_Central"/>
</dbReference>
<dbReference type="GO" id="GO:0003677">
    <property type="term" value="F:DNA binding"/>
    <property type="evidence" value="ECO:0000304"/>
    <property type="project" value="ProtInc"/>
</dbReference>
<dbReference type="GO" id="GO:0008270">
    <property type="term" value="F:zinc ion binding"/>
    <property type="evidence" value="ECO:0007669"/>
    <property type="project" value="UniProtKB-KW"/>
</dbReference>
<dbReference type="GO" id="GO:0006357">
    <property type="term" value="P:regulation of transcription by RNA polymerase II"/>
    <property type="evidence" value="ECO:0000318"/>
    <property type="project" value="GO_Central"/>
</dbReference>
<dbReference type="CDD" id="cd07765">
    <property type="entry name" value="KRAB_A-box"/>
    <property type="match status" value="1"/>
</dbReference>
<dbReference type="FunFam" id="3.30.160.60:FF:001737">
    <property type="entry name" value="Zinc finger protein 100"/>
    <property type="match status" value="3"/>
</dbReference>
<dbReference type="FunFam" id="3.30.160.60:FF:000034">
    <property type="entry name" value="zinc finger protein 25"/>
    <property type="match status" value="3"/>
</dbReference>
<dbReference type="FunFam" id="3.30.160.60:FF:001408">
    <property type="entry name" value="Zinc finger protein 260"/>
    <property type="match status" value="1"/>
</dbReference>
<dbReference type="FunFam" id="3.30.160.60:FF:001868">
    <property type="entry name" value="Zinc finger protein 264"/>
    <property type="match status" value="2"/>
</dbReference>
<dbReference type="FunFam" id="3.30.160.60:FF:000120">
    <property type="entry name" value="Zinc finger protein 430"/>
    <property type="match status" value="4"/>
</dbReference>
<dbReference type="FunFam" id="3.30.160.60:FF:000672">
    <property type="entry name" value="Zinc finger protein 430"/>
    <property type="match status" value="3"/>
</dbReference>
<dbReference type="FunFam" id="3.30.160.60:FF:000895">
    <property type="entry name" value="Zinc finger protein 597"/>
    <property type="match status" value="1"/>
</dbReference>
<dbReference type="FunFam" id="3.30.160.60:FF:000362">
    <property type="entry name" value="Zinc finger protein 606"/>
    <property type="match status" value="4"/>
</dbReference>
<dbReference type="Gene3D" id="6.10.140.140">
    <property type="match status" value="1"/>
</dbReference>
<dbReference type="Gene3D" id="3.30.160.60">
    <property type="entry name" value="Classic Zinc Finger"/>
    <property type="match status" value="22"/>
</dbReference>
<dbReference type="InterPro" id="IPR050752">
    <property type="entry name" value="C2H2-ZF_domain"/>
</dbReference>
<dbReference type="InterPro" id="IPR001909">
    <property type="entry name" value="KRAB"/>
</dbReference>
<dbReference type="InterPro" id="IPR036051">
    <property type="entry name" value="KRAB_dom_sf"/>
</dbReference>
<dbReference type="InterPro" id="IPR036236">
    <property type="entry name" value="Znf_C2H2_sf"/>
</dbReference>
<dbReference type="InterPro" id="IPR013087">
    <property type="entry name" value="Znf_C2H2_type"/>
</dbReference>
<dbReference type="PANTHER" id="PTHR24384">
    <property type="entry name" value="FINGER PUTATIVE TRANSCRIPTION FACTOR FAMILY-RELATED"/>
    <property type="match status" value="1"/>
</dbReference>
<dbReference type="PANTHER" id="PTHR24384:SF246">
    <property type="entry name" value="GENE, 19965-RELATED"/>
    <property type="match status" value="1"/>
</dbReference>
<dbReference type="Pfam" id="PF01352">
    <property type="entry name" value="KRAB"/>
    <property type="match status" value="1"/>
</dbReference>
<dbReference type="Pfam" id="PF00096">
    <property type="entry name" value="zf-C2H2"/>
    <property type="match status" value="19"/>
</dbReference>
<dbReference type="Pfam" id="PF13912">
    <property type="entry name" value="zf-C2H2_6"/>
    <property type="match status" value="1"/>
</dbReference>
<dbReference type="SMART" id="SM00349">
    <property type="entry name" value="KRAB"/>
    <property type="match status" value="1"/>
</dbReference>
<dbReference type="SMART" id="SM00355">
    <property type="entry name" value="ZnF_C2H2"/>
    <property type="match status" value="22"/>
</dbReference>
<dbReference type="SUPFAM" id="SSF57667">
    <property type="entry name" value="beta-beta-alpha zinc fingers"/>
    <property type="match status" value="12"/>
</dbReference>
<dbReference type="SUPFAM" id="SSF109640">
    <property type="entry name" value="KRAB domain (Kruppel-associated box)"/>
    <property type="match status" value="1"/>
</dbReference>
<dbReference type="PROSITE" id="PS50805">
    <property type="entry name" value="KRAB"/>
    <property type="match status" value="1"/>
</dbReference>
<dbReference type="PROSITE" id="PS00028">
    <property type="entry name" value="ZINC_FINGER_C2H2_1"/>
    <property type="match status" value="19"/>
</dbReference>
<dbReference type="PROSITE" id="PS50157">
    <property type="entry name" value="ZINC_FINGER_C2H2_2"/>
    <property type="match status" value="22"/>
</dbReference>
<name>ZNF43_HUMAN</name>